<proteinExistence type="inferred from homology"/>
<protein>
    <recommendedName>
        <fullName>Serine/threonine-protein phosphatase PP1(5.9)</fullName>
        <ecNumber>3.1.3.16</ecNumber>
    </recommendedName>
</protein>
<feature type="chain" id="PRO_0000058815" description="Serine/threonine-protein phosphatase PP1(5.9)">
    <location>
        <begin position="1"/>
        <end position="346"/>
    </location>
</feature>
<feature type="active site" description="Proton donor" evidence="1">
    <location>
        <position position="163"/>
    </location>
</feature>
<feature type="binding site" evidence="1">
    <location>
        <position position="102"/>
    </location>
    <ligand>
        <name>Mn(2+)</name>
        <dbReference type="ChEBI" id="CHEBI:29035"/>
        <label>1</label>
    </ligand>
</feature>
<feature type="binding site" evidence="1">
    <location>
        <position position="104"/>
    </location>
    <ligand>
        <name>Mn(2+)</name>
        <dbReference type="ChEBI" id="CHEBI:29035"/>
        <label>1</label>
    </ligand>
</feature>
<feature type="binding site" evidence="1">
    <location>
        <position position="130"/>
    </location>
    <ligand>
        <name>Mn(2+)</name>
        <dbReference type="ChEBI" id="CHEBI:29035"/>
        <label>1</label>
    </ligand>
</feature>
<feature type="binding site" evidence="1">
    <location>
        <position position="130"/>
    </location>
    <ligand>
        <name>Mn(2+)</name>
        <dbReference type="ChEBI" id="CHEBI:29035"/>
        <label>2</label>
    </ligand>
</feature>
<feature type="binding site" evidence="1">
    <location>
        <position position="162"/>
    </location>
    <ligand>
        <name>Mn(2+)</name>
        <dbReference type="ChEBI" id="CHEBI:29035"/>
        <label>2</label>
    </ligand>
</feature>
<feature type="binding site" evidence="1">
    <location>
        <position position="211"/>
    </location>
    <ligand>
        <name>Mn(2+)</name>
        <dbReference type="ChEBI" id="CHEBI:29035"/>
        <label>2</label>
    </ligand>
</feature>
<feature type="binding site" evidence="1">
    <location>
        <position position="287"/>
    </location>
    <ligand>
        <name>Mn(2+)</name>
        <dbReference type="ChEBI" id="CHEBI:29035"/>
        <label>2</label>
    </ligand>
</feature>
<keyword id="KW-0378">Hydrolase</keyword>
<keyword id="KW-0464">Manganese</keyword>
<keyword id="KW-0479">Metal-binding</keyword>
<keyword id="KW-0904">Protein phosphatase</keyword>
<name>PP12_TRYBB</name>
<sequence length="346" mass="39295">MNCREIIRKLLLNPAHNNAATRTAQGDNGDSNQRAYTRISRLAAFQSAQTQESTPKTNGTGRATTEGLTEAEVRWLVMESRALFMSQPMLVEIAAPVRICGDVHGQYTDLLRLFDLGGFPPDANYIFLGDYVDRGDQSLETICLLLAYKLSFPETFFLLRGNHECSSINRIYGFFDECKRRYSVRLWKQFTDTFNCMPVAGLVEGRILCMHGGLSPELTDLDQIRRILRPTDVPDSGLICDLLWSDPSTNMESNWSENDRGVSWTFSESVVKSFNKKFDLDLICRAHQVVDAGYEFFAARQLVTVFSAPNYCDEFDNAGAFMCVDENLMCSFVQIEPTRTLLRYFF</sequence>
<accession>P23734</accession>
<comment type="catalytic activity">
    <reaction>
        <text>O-phospho-L-seryl-[protein] + H2O = L-seryl-[protein] + phosphate</text>
        <dbReference type="Rhea" id="RHEA:20629"/>
        <dbReference type="Rhea" id="RHEA-COMP:9863"/>
        <dbReference type="Rhea" id="RHEA-COMP:11604"/>
        <dbReference type="ChEBI" id="CHEBI:15377"/>
        <dbReference type="ChEBI" id="CHEBI:29999"/>
        <dbReference type="ChEBI" id="CHEBI:43474"/>
        <dbReference type="ChEBI" id="CHEBI:83421"/>
        <dbReference type="EC" id="3.1.3.16"/>
    </reaction>
</comment>
<comment type="catalytic activity">
    <reaction>
        <text>O-phospho-L-threonyl-[protein] + H2O = L-threonyl-[protein] + phosphate</text>
        <dbReference type="Rhea" id="RHEA:47004"/>
        <dbReference type="Rhea" id="RHEA-COMP:11060"/>
        <dbReference type="Rhea" id="RHEA-COMP:11605"/>
        <dbReference type="ChEBI" id="CHEBI:15377"/>
        <dbReference type="ChEBI" id="CHEBI:30013"/>
        <dbReference type="ChEBI" id="CHEBI:43474"/>
        <dbReference type="ChEBI" id="CHEBI:61977"/>
        <dbReference type="EC" id="3.1.3.16"/>
    </reaction>
</comment>
<comment type="cofactor">
    <cofactor evidence="1">
        <name>Mn(2+)</name>
        <dbReference type="ChEBI" id="CHEBI:29035"/>
    </cofactor>
    <text evidence="1">Binds 2 manganese ions per subunit.</text>
</comment>
<comment type="miscellaneous">
    <text>Trypanosoma brucei contains two PP1 genes which are highly similar.</text>
</comment>
<comment type="similarity">
    <text evidence="2">Belongs to the PPP phosphatase family. PP-1 subfamily.</text>
</comment>
<dbReference type="EC" id="3.1.3.16"/>
<dbReference type="EMBL" id="X52746">
    <property type="protein sequence ID" value="CAA36960.1"/>
    <property type="molecule type" value="Genomic_DNA"/>
</dbReference>
<dbReference type="PIR" id="S12599">
    <property type="entry name" value="S12599"/>
</dbReference>
<dbReference type="SMR" id="P23734"/>
<dbReference type="OMA" id="REDYCHI"/>
<dbReference type="GO" id="GO:0005737">
    <property type="term" value="C:cytoplasm"/>
    <property type="evidence" value="ECO:0007669"/>
    <property type="project" value="TreeGrafter"/>
</dbReference>
<dbReference type="GO" id="GO:0005634">
    <property type="term" value="C:nucleus"/>
    <property type="evidence" value="ECO:0007669"/>
    <property type="project" value="TreeGrafter"/>
</dbReference>
<dbReference type="GO" id="GO:0046872">
    <property type="term" value="F:metal ion binding"/>
    <property type="evidence" value="ECO:0007669"/>
    <property type="project" value="UniProtKB-KW"/>
</dbReference>
<dbReference type="GO" id="GO:0004722">
    <property type="term" value="F:protein serine/threonine phosphatase activity"/>
    <property type="evidence" value="ECO:0007669"/>
    <property type="project" value="UniProtKB-EC"/>
</dbReference>
<dbReference type="CDD" id="cd07414">
    <property type="entry name" value="MPP_PP1_PPKL"/>
    <property type="match status" value="1"/>
</dbReference>
<dbReference type="FunFam" id="3.60.21.10:FF:000047">
    <property type="entry name" value="Serine/threonine-protein phosphatase"/>
    <property type="match status" value="1"/>
</dbReference>
<dbReference type="Gene3D" id="3.60.21.10">
    <property type="match status" value="1"/>
</dbReference>
<dbReference type="InterPro" id="IPR004843">
    <property type="entry name" value="Calcineurin-like_PHP_ApaH"/>
</dbReference>
<dbReference type="InterPro" id="IPR029052">
    <property type="entry name" value="Metallo-depent_PP-like"/>
</dbReference>
<dbReference type="InterPro" id="IPR050341">
    <property type="entry name" value="PP1_catalytic_subunit"/>
</dbReference>
<dbReference type="InterPro" id="IPR006186">
    <property type="entry name" value="Ser/Thr-sp_prot-phosphatase"/>
</dbReference>
<dbReference type="InterPro" id="IPR031675">
    <property type="entry name" value="STPPase_N"/>
</dbReference>
<dbReference type="PANTHER" id="PTHR11668">
    <property type="entry name" value="SERINE/THREONINE PROTEIN PHOSPHATASE"/>
    <property type="match status" value="1"/>
</dbReference>
<dbReference type="PANTHER" id="PTHR11668:SF300">
    <property type="entry name" value="SERINE_THREONINE-PROTEIN PHOSPHATASE"/>
    <property type="match status" value="1"/>
</dbReference>
<dbReference type="Pfam" id="PF00149">
    <property type="entry name" value="Metallophos"/>
    <property type="match status" value="1"/>
</dbReference>
<dbReference type="Pfam" id="PF16891">
    <property type="entry name" value="STPPase_N"/>
    <property type="match status" value="1"/>
</dbReference>
<dbReference type="PRINTS" id="PR00114">
    <property type="entry name" value="STPHPHTASE"/>
</dbReference>
<dbReference type="SMART" id="SM00156">
    <property type="entry name" value="PP2Ac"/>
    <property type="match status" value="1"/>
</dbReference>
<dbReference type="SUPFAM" id="SSF56300">
    <property type="entry name" value="Metallo-dependent phosphatases"/>
    <property type="match status" value="1"/>
</dbReference>
<dbReference type="PROSITE" id="PS00125">
    <property type="entry name" value="SER_THR_PHOSPHATASE"/>
    <property type="match status" value="1"/>
</dbReference>
<organism>
    <name type="scientific">Trypanosoma brucei brucei</name>
    <dbReference type="NCBI Taxonomy" id="5702"/>
    <lineage>
        <taxon>Eukaryota</taxon>
        <taxon>Discoba</taxon>
        <taxon>Euglenozoa</taxon>
        <taxon>Kinetoplastea</taxon>
        <taxon>Metakinetoplastina</taxon>
        <taxon>Trypanosomatida</taxon>
        <taxon>Trypanosomatidae</taxon>
        <taxon>Trypanosoma</taxon>
    </lineage>
</organism>
<reference key="1">
    <citation type="journal article" date="1990" name="Nucleic Acids Res.">
        <title>The Trypanosoma brucei protein phosphatase gene: polycistronic transcription with the RNA polymerase II largest subunit gene.</title>
        <authorList>
            <person name="Evers R."/>
            <person name="Cornelissen A.W.C.A."/>
        </authorList>
    </citation>
    <scope>NUCLEOTIDE SEQUENCE [GENOMIC DNA]</scope>
</reference>
<evidence type="ECO:0000250" key="1"/>
<evidence type="ECO:0000305" key="2"/>